<accession>A5W9B2</accession>
<keyword id="KW-0997">Cell inner membrane</keyword>
<keyword id="KW-1003">Cell membrane</keyword>
<keyword id="KW-0285">Flavoprotein</keyword>
<keyword id="KW-0288">FMN</keyword>
<keyword id="KW-0472">Membrane</keyword>
<keyword id="KW-0560">Oxidoreductase</keyword>
<evidence type="ECO:0000255" key="1">
    <source>
        <dbReference type="HAMAP-Rule" id="MF_01559"/>
    </source>
</evidence>
<reference key="1">
    <citation type="submission" date="2007-05" db="EMBL/GenBank/DDBJ databases">
        <title>Complete sequence of Pseudomonas putida F1.</title>
        <authorList>
            <consortium name="US DOE Joint Genome Institute"/>
            <person name="Copeland A."/>
            <person name="Lucas S."/>
            <person name="Lapidus A."/>
            <person name="Barry K."/>
            <person name="Detter J.C."/>
            <person name="Glavina del Rio T."/>
            <person name="Hammon N."/>
            <person name="Israni S."/>
            <person name="Dalin E."/>
            <person name="Tice H."/>
            <person name="Pitluck S."/>
            <person name="Chain P."/>
            <person name="Malfatti S."/>
            <person name="Shin M."/>
            <person name="Vergez L."/>
            <person name="Schmutz J."/>
            <person name="Larimer F."/>
            <person name="Land M."/>
            <person name="Hauser L."/>
            <person name="Kyrpides N."/>
            <person name="Lykidis A."/>
            <person name="Parales R."/>
            <person name="Richardson P."/>
        </authorList>
    </citation>
    <scope>NUCLEOTIDE SEQUENCE [LARGE SCALE GENOMIC DNA]</scope>
    <source>
        <strain>ATCC 700007 / DSM 6899 / JCM 31910 / BCRC 17059 / LMG 24140 / F1</strain>
    </source>
</reference>
<name>LLDD_PSEP1</name>
<dbReference type="EC" id="1.1.-.-" evidence="1"/>
<dbReference type="EMBL" id="CP000712">
    <property type="protein sequence ID" value="ABQ80722.1"/>
    <property type="molecule type" value="Genomic_DNA"/>
</dbReference>
<dbReference type="SMR" id="A5W9B2"/>
<dbReference type="KEGG" id="ppf:Pput_4602"/>
<dbReference type="eggNOG" id="COG1304">
    <property type="taxonomic scope" value="Bacteria"/>
</dbReference>
<dbReference type="HOGENOM" id="CLU_020639_0_0_6"/>
<dbReference type="GO" id="GO:0005886">
    <property type="term" value="C:plasma membrane"/>
    <property type="evidence" value="ECO:0007669"/>
    <property type="project" value="UniProtKB-SubCell"/>
</dbReference>
<dbReference type="GO" id="GO:0010181">
    <property type="term" value="F:FMN binding"/>
    <property type="evidence" value="ECO:0007669"/>
    <property type="project" value="InterPro"/>
</dbReference>
<dbReference type="GO" id="GO:0004459">
    <property type="term" value="F:L-lactate dehydrogenase activity"/>
    <property type="evidence" value="ECO:0007669"/>
    <property type="project" value="UniProtKB-UniRule"/>
</dbReference>
<dbReference type="GO" id="GO:0009060">
    <property type="term" value="P:aerobic respiration"/>
    <property type="evidence" value="ECO:0007669"/>
    <property type="project" value="TreeGrafter"/>
</dbReference>
<dbReference type="GO" id="GO:0006089">
    <property type="term" value="P:lactate metabolic process"/>
    <property type="evidence" value="ECO:0007669"/>
    <property type="project" value="UniProtKB-UniRule"/>
</dbReference>
<dbReference type="CDD" id="cd02809">
    <property type="entry name" value="alpha_hydroxyacid_oxid_FMN"/>
    <property type="match status" value="1"/>
</dbReference>
<dbReference type="FunFam" id="3.20.20.70:FF:000029">
    <property type="entry name" value="L-lactate dehydrogenase"/>
    <property type="match status" value="1"/>
</dbReference>
<dbReference type="Gene3D" id="3.20.20.70">
    <property type="entry name" value="Aldolase class I"/>
    <property type="match status" value="1"/>
</dbReference>
<dbReference type="HAMAP" id="MF_01559">
    <property type="entry name" value="L_lact_dehydr"/>
    <property type="match status" value="1"/>
</dbReference>
<dbReference type="InterPro" id="IPR013785">
    <property type="entry name" value="Aldolase_TIM"/>
</dbReference>
<dbReference type="InterPro" id="IPR012133">
    <property type="entry name" value="Alpha-hydoxy_acid_DH_FMN"/>
</dbReference>
<dbReference type="InterPro" id="IPR000262">
    <property type="entry name" value="FMN-dep_DH"/>
</dbReference>
<dbReference type="InterPro" id="IPR037396">
    <property type="entry name" value="FMN_HAD"/>
</dbReference>
<dbReference type="InterPro" id="IPR008259">
    <property type="entry name" value="FMN_hydac_DH_AS"/>
</dbReference>
<dbReference type="InterPro" id="IPR020920">
    <property type="entry name" value="LldD"/>
</dbReference>
<dbReference type="NCBIfam" id="NF033901">
    <property type="entry name" value="L_lactate_LldD"/>
    <property type="match status" value="1"/>
</dbReference>
<dbReference type="NCBIfam" id="NF008398">
    <property type="entry name" value="PRK11197.1"/>
    <property type="match status" value="1"/>
</dbReference>
<dbReference type="PANTHER" id="PTHR10578:SF85">
    <property type="entry name" value="L-LACTATE DEHYDROGENASE"/>
    <property type="match status" value="1"/>
</dbReference>
<dbReference type="PANTHER" id="PTHR10578">
    <property type="entry name" value="S -2-HYDROXY-ACID OXIDASE-RELATED"/>
    <property type="match status" value="1"/>
</dbReference>
<dbReference type="Pfam" id="PF01070">
    <property type="entry name" value="FMN_dh"/>
    <property type="match status" value="1"/>
</dbReference>
<dbReference type="PIRSF" id="PIRSF000138">
    <property type="entry name" value="Al-hdrx_acd_dh"/>
    <property type="match status" value="1"/>
</dbReference>
<dbReference type="SUPFAM" id="SSF51395">
    <property type="entry name" value="FMN-linked oxidoreductases"/>
    <property type="match status" value="1"/>
</dbReference>
<dbReference type="PROSITE" id="PS00557">
    <property type="entry name" value="FMN_HYDROXY_ACID_DH_1"/>
    <property type="match status" value="1"/>
</dbReference>
<dbReference type="PROSITE" id="PS51349">
    <property type="entry name" value="FMN_HYDROXY_ACID_DH_2"/>
    <property type="match status" value="1"/>
</dbReference>
<sequence>MIISASTDYRAAAQRKLPPFLFHYADGGAYAEHTLRHNVSDLAGIALRQRVLNNMSELSLETKLFDETLSMPVALAPVGLTGMYARRGEVQAARAAAAHGIPFTMSTVSVCPIEEVAPAINRPMWFQLYVLKDRGFMRNALERAKAAGVKTLVFTVDMPVPGARYRDAHSGMSGKNGPLRRVLQAMTHPEWAWDVGVMGRPHDLGNISKYRGNPTGLADYIGWLGNNFDPSISWKDLEWIREFWDGPMIIKGILDADDARDAVKFGADGIVVSNHGGRQLDGVLSSARALPAIADAVKGDLKILADSGIRSGLDVVRMIALGADTVLIGRAFLYALAVHGQAGVKNLLELFEKEMRVAMVLTGAKSISEITRDSLVRELGA</sequence>
<protein>
    <recommendedName>
        <fullName evidence="1">L-lactate dehydrogenase</fullName>
        <ecNumber evidence="1">1.1.-.-</ecNumber>
    </recommendedName>
</protein>
<feature type="chain" id="PRO_1000068992" description="L-lactate dehydrogenase">
    <location>
        <begin position="1"/>
        <end position="381"/>
    </location>
</feature>
<feature type="domain" description="FMN hydroxy acid dehydrogenase" evidence="1">
    <location>
        <begin position="1"/>
        <end position="380"/>
    </location>
</feature>
<feature type="active site" description="Proton acceptor" evidence="1">
    <location>
        <position position="275"/>
    </location>
</feature>
<feature type="binding site" evidence="1">
    <location>
        <position position="24"/>
    </location>
    <ligand>
        <name>substrate</name>
    </ligand>
</feature>
<feature type="binding site" evidence="1">
    <location>
        <position position="106"/>
    </location>
    <ligand>
        <name>FMN</name>
        <dbReference type="ChEBI" id="CHEBI:58210"/>
    </ligand>
</feature>
<feature type="binding site" evidence="1">
    <location>
        <position position="127"/>
    </location>
    <ligand>
        <name>FMN</name>
        <dbReference type="ChEBI" id="CHEBI:58210"/>
    </ligand>
</feature>
<feature type="binding site" evidence="1">
    <location>
        <position position="129"/>
    </location>
    <ligand>
        <name>substrate</name>
    </ligand>
</feature>
<feature type="binding site" evidence="1">
    <location>
        <position position="155"/>
    </location>
    <ligand>
        <name>FMN</name>
        <dbReference type="ChEBI" id="CHEBI:58210"/>
    </ligand>
</feature>
<feature type="binding site" evidence="1">
    <location>
        <position position="164"/>
    </location>
    <ligand>
        <name>substrate</name>
    </ligand>
</feature>
<feature type="binding site" evidence="1">
    <location>
        <position position="251"/>
    </location>
    <ligand>
        <name>FMN</name>
        <dbReference type="ChEBI" id="CHEBI:58210"/>
    </ligand>
</feature>
<feature type="binding site" evidence="1">
    <location>
        <position position="278"/>
    </location>
    <ligand>
        <name>substrate</name>
    </ligand>
</feature>
<feature type="binding site" evidence="1">
    <location>
        <begin position="306"/>
        <end position="330"/>
    </location>
    <ligand>
        <name>FMN</name>
        <dbReference type="ChEBI" id="CHEBI:58210"/>
    </ligand>
</feature>
<comment type="function">
    <text evidence="1">Catalyzes the conversion of L-lactate to pyruvate. Is coupled to the respiratory chain.</text>
</comment>
<comment type="catalytic activity">
    <reaction evidence="1">
        <text>(S)-lactate + A = pyruvate + AH2</text>
        <dbReference type="Rhea" id="RHEA:45816"/>
        <dbReference type="ChEBI" id="CHEBI:13193"/>
        <dbReference type="ChEBI" id="CHEBI:15361"/>
        <dbReference type="ChEBI" id="CHEBI:16651"/>
        <dbReference type="ChEBI" id="CHEBI:17499"/>
    </reaction>
</comment>
<comment type="cofactor">
    <cofactor evidence="1">
        <name>FMN</name>
        <dbReference type="ChEBI" id="CHEBI:58210"/>
    </cofactor>
</comment>
<comment type="subunit">
    <text evidence="1">Homotetramer.</text>
</comment>
<comment type="subcellular location">
    <subcellularLocation>
        <location evidence="1">Cell inner membrane</location>
        <topology evidence="1">Peripheral membrane protein</topology>
    </subcellularLocation>
</comment>
<comment type="similarity">
    <text evidence="1">Belongs to the FMN-dependent alpha-hydroxy acid dehydrogenase family.</text>
</comment>
<organism>
    <name type="scientific">Pseudomonas putida (strain ATCC 700007 / DSM 6899 / JCM 31910 / BCRC 17059 / LMG 24140 / F1)</name>
    <dbReference type="NCBI Taxonomy" id="351746"/>
    <lineage>
        <taxon>Bacteria</taxon>
        <taxon>Pseudomonadati</taxon>
        <taxon>Pseudomonadota</taxon>
        <taxon>Gammaproteobacteria</taxon>
        <taxon>Pseudomonadales</taxon>
        <taxon>Pseudomonadaceae</taxon>
        <taxon>Pseudomonas</taxon>
    </lineage>
</organism>
<gene>
    <name evidence="1" type="primary">lldD</name>
    <name type="ordered locus">Pput_4602</name>
</gene>
<proteinExistence type="inferred from homology"/>